<sequence>MATMQCDVVSVKESIYSGAVTMLIAKGAGGELGILPGHAPLVTLLQPGPIRVLLENGTEEIVYVSGGVLEVQPHVVTVLADTAIRADNLDEAAILEARKNAEQLLANQKSDLDSAAALAALAETAAQLETIRKIKNRAQ</sequence>
<proteinExistence type="evidence at protein level"/>
<name>ATPE_ACIBT</name>
<dbReference type="EMBL" id="CP000521">
    <property type="protein sequence ID" value="ABO10639.2"/>
    <property type="molecule type" value="Genomic_DNA"/>
</dbReference>
<dbReference type="RefSeq" id="WP_000224542.1">
    <property type="nucleotide sequence ID" value="NZ_CP053098.1"/>
</dbReference>
<dbReference type="PDB" id="7P2Y">
    <property type="method" value="EM"/>
    <property type="resolution" value="3.10 A"/>
    <property type="chains" value="e=1-139"/>
</dbReference>
<dbReference type="PDB" id="7P3N">
    <property type="method" value="EM"/>
    <property type="resolution" value="4.60 A"/>
    <property type="chains" value="e=1-139"/>
</dbReference>
<dbReference type="PDB" id="7P3W">
    <property type="method" value="EM"/>
    <property type="resolution" value="4.30 A"/>
    <property type="chains" value="e=1-139"/>
</dbReference>
<dbReference type="PDB" id="7YRY">
    <property type="method" value="EM"/>
    <property type="resolution" value="3.00 A"/>
    <property type="chains" value="e=1-139"/>
</dbReference>
<dbReference type="PDB" id="8ZI0">
    <property type="method" value="EM"/>
    <property type="resolution" value="3.18 A"/>
    <property type="chains" value="e=1-133"/>
</dbReference>
<dbReference type="PDB" id="8ZI1">
    <property type="method" value="EM"/>
    <property type="resolution" value="2.92 A"/>
    <property type="chains" value="e=1-133"/>
</dbReference>
<dbReference type="PDB" id="8ZI2">
    <property type="method" value="EM"/>
    <property type="resolution" value="2.99 A"/>
    <property type="chains" value="e=1-133"/>
</dbReference>
<dbReference type="PDB" id="8ZI3">
    <property type="method" value="EM"/>
    <property type="resolution" value="2.89 A"/>
    <property type="chains" value="e=1-133"/>
</dbReference>
<dbReference type="PDBsum" id="7P2Y"/>
<dbReference type="PDBsum" id="7P3N"/>
<dbReference type="PDBsum" id="7P3W"/>
<dbReference type="PDBsum" id="7YRY"/>
<dbReference type="PDBsum" id="8ZI0"/>
<dbReference type="PDBsum" id="8ZI1"/>
<dbReference type="PDBsum" id="8ZI2"/>
<dbReference type="PDBsum" id="8ZI3"/>
<dbReference type="EMDB" id="EMD-13174"/>
<dbReference type="EMDB" id="EMD-13181"/>
<dbReference type="EMDB" id="EMD-13186"/>
<dbReference type="EMDB" id="EMD-34066"/>
<dbReference type="SMR" id="A3M145"/>
<dbReference type="KEGG" id="acb:A1S_0156"/>
<dbReference type="HOGENOM" id="CLU_084338_2_0_6"/>
<dbReference type="GO" id="GO:0005886">
    <property type="term" value="C:plasma membrane"/>
    <property type="evidence" value="ECO:0007669"/>
    <property type="project" value="UniProtKB-SubCell"/>
</dbReference>
<dbReference type="GO" id="GO:0045259">
    <property type="term" value="C:proton-transporting ATP synthase complex"/>
    <property type="evidence" value="ECO:0007669"/>
    <property type="project" value="UniProtKB-KW"/>
</dbReference>
<dbReference type="GO" id="GO:0005524">
    <property type="term" value="F:ATP binding"/>
    <property type="evidence" value="ECO:0007669"/>
    <property type="project" value="UniProtKB-UniRule"/>
</dbReference>
<dbReference type="GO" id="GO:0046933">
    <property type="term" value="F:proton-transporting ATP synthase activity, rotational mechanism"/>
    <property type="evidence" value="ECO:0007669"/>
    <property type="project" value="UniProtKB-UniRule"/>
</dbReference>
<dbReference type="CDD" id="cd12152">
    <property type="entry name" value="F1-ATPase_delta"/>
    <property type="match status" value="1"/>
</dbReference>
<dbReference type="FunFam" id="2.60.15.10:FF:000001">
    <property type="entry name" value="ATP synthase epsilon chain"/>
    <property type="match status" value="1"/>
</dbReference>
<dbReference type="Gene3D" id="1.20.5.440">
    <property type="entry name" value="ATP synthase delta/epsilon subunit, C-terminal domain"/>
    <property type="match status" value="1"/>
</dbReference>
<dbReference type="Gene3D" id="2.60.15.10">
    <property type="entry name" value="F0F1 ATP synthase delta/epsilon subunit, N-terminal"/>
    <property type="match status" value="1"/>
</dbReference>
<dbReference type="HAMAP" id="MF_00530">
    <property type="entry name" value="ATP_synth_epsil_bac"/>
    <property type="match status" value="1"/>
</dbReference>
<dbReference type="InterPro" id="IPR036794">
    <property type="entry name" value="ATP_F1_dsu/esu_C_sf"/>
</dbReference>
<dbReference type="InterPro" id="IPR001469">
    <property type="entry name" value="ATP_synth_F1_dsu/esu"/>
</dbReference>
<dbReference type="InterPro" id="IPR020546">
    <property type="entry name" value="ATP_synth_F1_dsu/esu_N"/>
</dbReference>
<dbReference type="InterPro" id="IPR036771">
    <property type="entry name" value="ATPsynth_dsu/esu_N"/>
</dbReference>
<dbReference type="NCBIfam" id="TIGR01216">
    <property type="entry name" value="ATP_synt_epsi"/>
    <property type="match status" value="1"/>
</dbReference>
<dbReference type="NCBIfam" id="NF001847">
    <property type="entry name" value="PRK00571.1-4"/>
    <property type="match status" value="1"/>
</dbReference>
<dbReference type="PANTHER" id="PTHR13822">
    <property type="entry name" value="ATP SYNTHASE DELTA/EPSILON CHAIN"/>
    <property type="match status" value="1"/>
</dbReference>
<dbReference type="PANTHER" id="PTHR13822:SF10">
    <property type="entry name" value="ATP SYNTHASE EPSILON CHAIN, CHLOROPLASTIC"/>
    <property type="match status" value="1"/>
</dbReference>
<dbReference type="Pfam" id="PF02823">
    <property type="entry name" value="ATP-synt_DE_N"/>
    <property type="match status" value="1"/>
</dbReference>
<dbReference type="SUPFAM" id="SSF46604">
    <property type="entry name" value="Epsilon subunit of F1F0-ATP synthase C-terminal domain"/>
    <property type="match status" value="1"/>
</dbReference>
<dbReference type="SUPFAM" id="SSF51344">
    <property type="entry name" value="Epsilon subunit of F1F0-ATP synthase N-terminal domain"/>
    <property type="match status" value="1"/>
</dbReference>
<gene>
    <name evidence="1" type="primary">atpC</name>
    <name type="ordered locus">A1S_0156</name>
</gene>
<evidence type="ECO:0000255" key="1">
    <source>
        <dbReference type="HAMAP-Rule" id="MF_00530"/>
    </source>
</evidence>
<evidence type="ECO:0007829" key="2">
    <source>
        <dbReference type="PDB" id="7P2Y"/>
    </source>
</evidence>
<reference key="1">
    <citation type="journal article" date="2007" name="Genes Dev.">
        <title>New insights into Acinetobacter baumannii pathogenesis revealed by high-density pyrosequencing and transposon mutagenesis.</title>
        <authorList>
            <person name="Smith M.G."/>
            <person name="Gianoulis T.A."/>
            <person name="Pukatzki S."/>
            <person name="Mekalanos J.J."/>
            <person name="Ornston L.N."/>
            <person name="Gerstein M."/>
            <person name="Snyder M."/>
        </authorList>
    </citation>
    <scope>NUCLEOTIDE SEQUENCE [LARGE SCALE GENOMIC DNA]</scope>
    <source>
        <strain>ATCC 17978 / DSM 105126 / CIP 53.77 / LMG 1025 / NCDC KC755 / 5377</strain>
    </source>
</reference>
<protein>
    <recommendedName>
        <fullName evidence="1">ATP synthase epsilon chain</fullName>
    </recommendedName>
    <alternativeName>
        <fullName evidence="1">ATP synthase F1 sector epsilon subunit</fullName>
    </alternativeName>
    <alternativeName>
        <fullName evidence="1">F-ATPase epsilon subunit</fullName>
    </alternativeName>
</protein>
<keyword id="KW-0002">3D-structure</keyword>
<keyword id="KW-0066">ATP synthesis</keyword>
<keyword id="KW-0997">Cell inner membrane</keyword>
<keyword id="KW-1003">Cell membrane</keyword>
<keyword id="KW-0139">CF(1)</keyword>
<keyword id="KW-0375">Hydrogen ion transport</keyword>
<keyword id="KW-0406">Ion transport</keyword>
<keyword id="KW-0472">Membrane</keyword>
<keyword id="KW-0813">Transport</keyword>
<feature type="chain" id="PRO_1000127817" description="ATP synthase epsilon chain">
    <location>
        <begin position="1"/>
        <end position="139"/>
    </location>
</feature>
<feature type="strand" evidence="2">
    <location>
        <begin position="4"/>
        <end position="26"/>
    </location>
</feature>
<feature type="strand" evidence="2">
    <location>
        <begin position="28"/>
        <end position="34"/>
    </location>
</feature>
<feature type="strand" evidence="2">
    <location>
        <begin position="41"/>
        <end position="45"/>
    </location>
</feature>
<feature type="strand" evidence="2">
    <location>
        <begin position="49"/>
        <end position="53"/>
    </location>
</feature>
<feature type="strand" evidence="2">
    <location>
        <begin position="59"/>
        <end position="64"/>
    </location>
</feature>
<feature type="strand" evidence="2">
    <location>
        <begin position="66"/>
        <end position="71"/>
    </location>
</feature>
<feature type="strand" evidence="2">
    <location>
        <begin position="73"/>
        <end position="85"/>
    </location>
</feature>
<feature type="helix" evidence="2">
    <location>
        <begin position="92"/>
        <end position="126"/>
    </location>
</feature>
<feature type="helix" evidence="2">
    <location>
        <begin position="129"/>
        <end position="132"/>
    </location>
</feature>
<feature type="turn" evidence="2">
    <location>
        <begin position="133"/>
        <end position="136"/>
    </location>
</feature>
<comment type="function">
    <text evidence="1">Produces ATP from ADP in the presence of a proton gradient across the membrane.</text>
</comment>
<comment type="subunit">
    <text evidence="1">F-type ATPases have 2 components, CF(1) - the catalytic core - and CF(0) - the membrane proton channel. CF(1) has five subunits: alpha(3), beta(3), gamma(1), delta(1), epsilon(1). CF(0) has three main subunits: a, b and c.</text>
</comment>
<comment type="subcellular location">
    <subcellularLocation>
        <location evidence="1">Cell inner membrane</location>
        <topology evidence="1">Peripheral membrane protein</topology>
    </subcellularLocation>
</comment>
<comment type="similarity">
    <text evidence="1">Belongs to the ATPase epsilon chain family.</text>
</comment>
<organism>
    <name type="scientific">Acinetobacter baumannii (strain ATCC 17978 / DSM 105126 / CIP 53.77 / LMG 1025 / NCDC KC755 / 5377)</name>
    <dbReference type="NCBI Taxonomy" id="400667"/>
    <lineage>
        <taxon>Bacteria</taxon>
        <taxon>Pseudomonadati</taxon>
        <taxon>Pseudomonadota</taxon>
        <taxon>Gammaproteobacteria</taxon>
        <taxon>Moraxellales</taxon>
        <taxon>Moraxellaceae</taxon>
        <taxon>Acinetobacter</taxon>
        <taxon>Acinetobacter calcoaceticus/baumannii complex</taxon>
    </lineage>
</organism>
<accession>A3M145</accession>